<reference key="1">
    <citation type="journal article" date="1986" name="EMBO J.">
        <title>The complete nucleotide sequence of the tobacco chloroplast genome: its gene organization and expression.</title>
        <authorList>
            <person name="Shinozaki K."/>
            <person name="Ohme M."/>
            <person name="Tanaka M."/>
            <person name="Wakasugi T."/>
            <person name="Hayashida N."/>
            <person name="Matsubayashi T."/>
            <person name="Zaita N."/>
            <person name="Chunwongse J."/>
            <person name="Obokata J."/>
            <person name="Yamaguchi-Shinozaki K."/>
            <person name="Ohto C."/>
            <person name="Torazawa K."/>
            <person name="Meng B.-Y."/>
            <person name="Sugita M."/>
            <person name="Deno H."/>
            <person name="Kamogashira T."/>
            <person name="Yamada K."/>
            <person name="Kusuda J."/>
            <person name="Takaiwa F."/>
            <person name="Kato A."/>
            <person name="Tohdoh N."/>
            <person name="Shimada H."/>
            <person name="Sugiura M."/>
        </authorList>
    </citation>
    <scope>NUCLEOTIDE SEQUENCE [LARGE SCALE GENOMIC DNA]</scope>
    <source>
        <strain>cv. Bright Yellow 4</strain>
    </source>
</reference>
<dbReference type="EC" id="7.1.1.-" evidence="1"/>
<dbReference type="EMBL" id="Z00044">
    <property type="protein sequence ID" value="CAA77358.1"/>
    <property type="molecule type" value="Genomic_DNA"/>
</dbReference>
<dbReference type="PIR" id="A00426">
    <property type="entry name" value="DENTN3"/>
</dbReference>
<dbReference type="RefSeq" id="NP_054504.1">
    <property type="nucleotide sequence ID" value="NC_001879.2"/>
</dbReference>
<dbReference type="SMR" id="P06258"/>
<dbReference type="GeneID" id="800470"/>
<dbReference type="KEGG" id="nta:800470"/>
<dbReference type="OMA" id="YVYAFLY"/>
<dbReference type="OrthoDB" id="154075at2759"/>
<dbReference type="Proteomes" id="UP000084051">
    <property type="component" value="Unplaced"/>
</dbReference>
<dbReference type="GO" id="GO:0009535">
    <property type="term" value="C:chloroplast thylakoid membrane"/>
    <property type="evidence" value="ECO:0007669"/>
    <property type="project" value="UniProtKB-SubCell"/>
</dbReference>
<dbReference type="GO" id="GO:0008137">
    <property type="term" value="F:NADH dehydrogenase (ubiquinone) activity"/>
    <property type="evidence" value="ECO:0007669"/>
    <property type="project" value="InterPro"/>
</dbReference>
<dbReference type="GO" id="GO:0048038">
    <property type="term" value="F:quinone binding"/>
    <property type="evidence" value="ECO:0007669"/>
    <property type="project" value="UniProtKB-KW"/>
</dbReference>
<dbReference type="GO" id="GO:0019684">
    <property type="term" value="P:photosynthesis, light reaction"/>
    <property type="evidence" value="ECO:0007669"/>
    <property type="project" value="UniProtKB-UniRule"/>
</dbReference>
<dbReference type="FunFam" id="1.20.58.1610:FF:000001">
    <property type="entry name" value="NAD(P)H-quinone oxidoreductase subunit 3, chloroplastic"/>
    <property type="match status" value="1"/>
</dbReference>
<dbReference type="Gene3D" id="1.20.58.1610">
    <property type="entry name" value="NADH:ubiquinone/plastoquinone oxidoreductase, chain 3"/>
    <property type="match status" value="1"/>
</dbReference>
<dbReference type="HAMAP" id="MF_01394">
    <property type="entry name" value="NDH1_NuoA"/>
    <property type="match status" value="1"/>
</dbReference>
<dbReference type="InterPro" id="IPR023043">
    <property type="entry name" value="NAD(P)H_OxRDtase_bac/plastid"/>
</dbReference>
<dbReference type="InterPro" id="IPR000440">
    <property type="entry name" value="NADH_UbQ/plastoQ_OxRdtase_su3"/>
</dbReference>
<dbReference type="InterPro" id="IPR038430">
    <property type="entry name" value="NDAH_ubi_oxred_su3_sf"/>
</dbReference>
<dbReference type="PANTHER" id="PTHR11058">
    <property type="entry name" value="NADH-UBIQUINONE OXIDOREDUCTASE CHAIN 3"/>
    <property type="match status" value="1"/>
</dbReference>
<dbReference type="PANTHER" id="PTHR11058:SF9">
    <property type="entry name" value="NADH-UBIQUINONE OXIDOREDUCTASE CHAIN 3"/>
    <property type="match status" value="1"/>
</dbReference>
<dbReference type="Pfam" id="PF00507">
    <property type="entry name" value="Oxidored_q4"/>
    <property type="match status" value="1"/>
</dbReference>
<proteinExistence type="inferred from homology"/>
<evidence type="ECO:0000255" key="1">
    <source>
        <dbReference type="HAMAP-Rule" id="MF_01394"/>
    </source>
</evidence>
<comment type="function">
    <text evidence="1">NDH shuttles electrons from NAD(P)H:plastoquinone, via FMN and iron-sulfur (Fe-S) centers, to quinones in the photosynthetic chain and possibly in a chloroplast respiratory chain. The immediate electron acceptor for the enzyme in this species is believed to be plastoquinone. Couples the redox reaction to proton translocation, and thus conserves the redox energy in a proton gradient.</text>
</comment>
<comment type="catalytic activity">
    <reaction evidence="1">
        <text>a plastoquinone + NADH + (n+1) H(+)(in) = a plastoquinol + NAD(+) + n H(+)(out)</text>
        <dbReference type="Rhea" id="RHEA:42608"/>
        <dbReference type="Rhea" id="RHEA-COMP:9561"/>
        <dbReference type="Rhea" id="RHEA-COMP:9562"/>
        <dbReference type="ChEBI" id="CHEBI:15378"/>
        <dbReference type="ChEBI" id="CHEBI:17757"/>
        <dbReference type="ChEBI" id="CHEBI:57540"/>
        <dbReference type="ChEBI" id="CHEBI:57945"/>
        <dbReference type="ChEBI" id="CHEBI:62192"/>
    </reaction>
</comment>
<comment type="catalytic activity">
    <reaction evidence="1">
        <text>a plastoquinone + NADPH + (n+1) H(+)(in) = a plastoquinol + NADP(+) + n H(+)(out)</text>
        <dbReference type="Rhea" id="RHEA:42612"/>
        <dbReference type="Rhea" id="RHEA-COMP:9561"/>
        <dbReference type="Rhea" id="RHEA-COMP:9562"/>
        <dbReference type="ChEBI" id="CHEBI:15378"/>
        <dbReference type="ChEBI" id="CHEBI:17757"/>
        <dbReference type="ChEBI" id="CHEBI:57783"/>
        <dbReference type="ChEBI" id="CHEBI:58349"/>
        <dbReference type="ChEBI" id="CHEBI:62192"/>
    </reaction>
</comment>
<comment type="subunit">
    <text evidence="1">NDH is composed of at least 16 different subunits, 5 of which are encoded in the nucleus.</text>
</comment>
<comment type="subcellular location">
    <subcellularLocation>
        <location evidence="1">Plastid</location>
        <location evidence="1">Chloroplast thylakoid membrane</location>
        <topology evidence="1">Multi-pass membrane protein</topology>
    </subcellularLocation>
</comment>
<comment type="similarity">
    <text evidence="1">Belongs to the complex I subunit 3 family.</text>
</comment>
<feature type="chain" id="PRO_0000117855" description="NAD(P)H-quinone oxidoreductase subunit 3, chloroplastic">
    <location>
        <begin position="1"/>
        <end position="120"/>
    </location>
</feature>
<feature type="transmembrane region" description="Helical" evidence="1">
    <location>
        <begin position="9"/>
        <end position="29"/>
    </location>
</feature>
<feature type="transmembrane region" description="Helical" evidence="1">
    <location>
        <begin position="64"/>
        <end position="84"/>
    </location>
</feature>
<feature type="transmembrane region" description="Helical" evidence="1">
    <location>
        <begin position="88"/>
        <end position="108"/>
    </location>
</feature>
<accession>P06258</accession>
<sequence>MFLLYEYDFFWAFLIISILVPILAFLISGVLAPISKGPEKLSTYESGIEPMGDAWLQFRIRYYMFALVFVVFDVETVFLYPWAMSFDVLGVSVFIEAFIFVLILIIGLVYAWRKGALEWS</sequence>
<keyword id="KW-0150">Chloroplast</keyword>
<keyword id="KW-0472">Membrane</keyword>
<keyword id="KW-0520">NAD</keyword>
<keyword id="KW-0521">NADP</keyword>
<keyword id="KW-0934">Plastid</keyword>
<keyword id="KW-0618">Plastoquinone</keyword>
<keyword id="KW-0874">Quinone</keyword>
<keyword id="KW-1185">Reference proteome</keyword>
<keyword id="KW-0793">Thylakoid</keyword>
<keyword id="KW-1278">Translocase</keyword>
<keyword id="KW-0812">Transmembrane</keyword>
<keyword id="KW-1133">Transmembrane helix</keyword>
<keyword id="KW-0813">Transport</keyword>
<geneLocation type="chloroplast"/>
<protein>
    <recommendedName>
        <fullName evidence="1">NAD(P)H-quinone oxidoreductase subunit 3, chloroplastic</fullName>
        <ecNumber evidence="1">7.1.1.-</ecNumber>
    </recommendedName>
    <alternativeName>
        <fullName evidence="1">NAD(P)H dehydrogenase subunit 3</fullName>
    </alternativeName>
    <alternativeName>
        <fullName evidence="1">NADH-plastoquinone oxidoreductase subunit 3</fullName>
    </alternativeName>
</protein>
<gene>
    <name evidence="1" type="primary">ndhC</name>
    <name type="synonym">ndh3</name>
</gene>
<organism>
    <name type="scientific">Nicotiana tabacum</name>
    <name type="common">Common tobacco</name>
    <dbReference type="NCBI Taxonomy" id="4097"/>
    <lineage>
        <taxon>Eukaryota</taxon>
        <taxon>Viridiplantae</taxon>
        <taxon>Streptophyta</taxon>
        <taxon>Embryophyta</taxon>
        <taxon>Tracheophyta</taxon>
        <taxon>Spermatophyta</taxon>
        <taxon>Magnoliopsida</taxon>
        <taxon>eudicotyledons</taxon>
        <taxon>Gunneridae</taxon>
        <taxon>Pentapetalae</taxon>
        <taxon>asterids</taxon>
        <taxon>lamiids</taxon>
        <taxon>Solanales</taxon>
        <taxon>Solanaceae</taxon>
        <taxon>Nicotianoideae</taxon>
        <taxon>Nicotianeae</taxon>
        <taxon>Nicotiana</taxon>
    </lineage>
</organism>
<name>NU3C_TOBAC</name>